<proteinExistence type="inferred from homology"/>
<gene>
    <name type="primary">SFH5</name>
    <name type="ordered locus">KLLA0A05885g</name>
</gene>
<sequence>MPLNFETDEQKKCYELLRADVENIVKETGYDELYGHKLTPDDQFYEEVIVDNLIYKFCRANQFEIEGAKSQLKKTLKWRKEFKPLHAAFSETHDSLLNDVCAITVSEENDPNQKVVSWNLYGLLVKHKEVFEDTDKFLRFRIGLMERGLQLLDFASEDNYLMTQVHDYNNVSMWRLDPAIKKCSKAIIEVFQDFYPETLFSKFFVNVPYVMTWLYEIVKRFVSEDTRKKFIVMSDGTQMKDYLKVLPKEYGGEATLNSSKLENIEPNAYVSYLLTQCGGEEPAETTAPEQEKETATA</sequence>
<evidence type="ECO:0000250" key="1">
    <source>
        <dbReference type="UniProtKB" id="A6ZQI5"/>
    </source>
</evidence>
<evidence type="ECO:0000250" key="2">
    <source>
        <dbReference type="UniProtKB" id="P47008"/>
    </source>
</evidence>
<evidence type="ECO:0000255" key="3">
    <source>
        <dbReference type="PROSITE-ProRule" id="PRU00056"/>
    </source>
</evidence>
<evidence type="ECO:0000305" key="4"/>
<name>SFH5_KLULA</name>
<dbReference type="EMBL" id="CR382121">
    <property type="protein sequence ID" value="CAH02850.1"/>
    <property type="molecule type" value="Genomic_DNA"/>
</dbReference>
<dbReference type="RefSeq" id="XP_451262.1">
    <property type="nucleotide sequence ID" value="XM_451262.1"/>
</dbReference>
<dbReference type="SMR" id="Q6CXS7"/>
<dbReference type="FunCoup" id="Q6CXS7">
    <property type="interactions" value="61"/>
</dbReference>
<dbReference type="STRING" id="284590.Q6CXS7"/>
<dbReference type="PaxDb" id="284590-Q6CXS7"/>
<dbReference type="KEGG" id="kla:KLLA0_A05885g"/>
<dbReference type="eggNOG" id="KOG1471">
    <property type="taxonomic scope" value="Eukaryota"/>
</dbReference>
<dbReference type="HOGENOM" id="CLU_045138_0_1_1"/>
<dbReference type="InParanoid" id="Q6CXS7"/>
<dbReference type="OMA" id="KRVVTWN"/>
<dbReference type="Proteomes" id="UP000000598">
    <property type="component" value="Chromosome A"/>
</dbReference>
<dbReference type="GO" id="GO:0032541">
    <property type="term" value="C:cortical endoplasmic reticulum"/>
    <property type="evidence" value="ECO:0007669"/>
    <property type="project" value="TreeGrafter"/>
</dbReference>
<dbReference type="GO" id="GO:0005829">
    <property type="term" value="C:cytosol"/>
    <property type="evidence" value="ECO:0007669"/>
    <property type="project" value="TreeGrafter"/>
</dbReference>
<dbReference type="GO" id="GO:0005789">
    <property type="term" value="C:endoplasmic reticulum membrane"/>
    <property type="evidence" value="ECO:0007669"/>
    <property type="project" value="UniProtKB-SubCell"/>
</dbReference>
<dbReference type="GO" id="GO:0005886">
    <property type="term" value="C:plasma membrane"/>
    <property type="evidence" value="ECO:0007669"/>
    <property type="project" value="TreeGrafter"/>
</dbReference>
<dbReference type="GO" id="GO:0046872">
    <property type="term" value="F:metal ion binding"/>
    <property type="evidence" value="ECO:0007669"/>
    <property type="project" value="UniProtKB-KW"/>
</dbReference>
<dbReference type="GO" id="GO:0008526">
    <property type="term" value="F:phosphatidylinositol transfer activity"/>
    <property type="evidence" value="ECO:0007669"/>
    <property type="project" value="InterPro"/>
</dbReference>
<dbReference type="GO" id="GO:0043001">
    <property type="term" value="P:Golgi to plasma membrane protein transport"/>
    <property type="evidence" value="ECO:0007669"/>
    <property type="project" value="TreeGrafter"/>
</dbReference>
<dbReference type="GO" id="GO:0017157">
    <property type="term" value="P:regulation of exocytosis"/>
    <property type="evidence" value="ECO:0007669"/>
    <property type="project" value="TreeGrafter"/>
</dbReference>
<dbReference type="CDD" id="cd00170">
    <property type="entry name" value="SEC14"/>
    <property type="match status" value="1"/>
</dbReference>
<dbReference type="Gene3D" id="3.40.525.10">
    <property type="entry name" value="CRAL-TRIO lipid binding domain"/>
    <property type="match status" value="1"/>
</dbReference>
<dbReference type="InterPro" id="IPR001251">
    <property type="entry name" value="CRAL-TRIO_dom"/>
</dbReference>
<dbReference type="InterPro" id="IPR036865">
    <property type="entry name" value="CRAL-TRIO_dom_sf"/>
</dbReference>
<dbReference type="InterPro" id="IPR011074">
    <property type="entry name" value="CRAL/TRIO_N_dom"/>
</dbReference>
<dbReference type="InterPro" id="IPR036273">
    <property type="entry name" value="CRAL/TRIO_N_dom_sf"/>
</dbReference>
<dbReference type="InterPro" id="IPR042938">
    <property type="entry name" value="Sfh5"/>
</dbReference>
<dbReference type="PANTHER" id="PTHR47669">
    <property type="entry name" value="PHOSPHATIDYLINOSITOL TRANSFER PROTEIN SFH5"/>
    <property type="match status" value="1"/>
</dbReference>
<dbReference type="PANTHER" id="PTHR47669:SF1">
    <property type="entry name" value="PHOSPHATIDYLINOSITOL TRANSFER PROTEIN SFH5"/>
    <property type="match status" value="1"/>
</dbReference>
<dbReference type="Pfam" id="PF00650">
    <property type="entry name" value="CRAL_TRIO"/>
    <property type="match status" value="1"/>
</dbReference>
<dbReference type="Pfam" id="PF03765">
    <property type="entry name" value="CRAL_TRIO_N"/>
    <property type="match status" value="1"/>
</dbReference>
<dbReference type="SMART" id="SM00516">
    <property type="entry name" value="SEC14"/>
    <property type="match status" value="1"/>
</dbReference>
<dbReference type="SUPFAM" id="SSF52087">
    <property type="entry name" value="CRAL/TRIO domain"/>
    <property type="match status" value="1"/>
</dbReference>
<dbReference type="SUPFAM" id="SSF46938">
    <property type="entry name" value="CRAL/TRIO N-terminal domain"/>
    <property type="match status" value="1"/>
</dbReference>
<dbReference type="PROSITE" id="PS50191">
    <property type="entry name" value="CRAL_TRIO"/>
    <property type="match status" value="1"/>
</dbReference>
<comment type="function">
    <text evidence="2">Non-classical phosphatidylinositol (PtdIns) transfer protein (PITP), which exhibits PtdIns-binding/transfer activity in the absence of detectable PtdCho-binding/transfer activity. Regulates PtdIns(4,5)P2 homeostasis at the plasma membrane. Heme-binding protein that may play a role in organic oxidant-induced stress responses.</text>
</comment>
<comment type="catalytic activity">
    <reaction evidence="2">
        <text>a 1,2-diacyl-sn-glycero-3-phospho-(1D-myo-inositol)(in) = a 1,2-diacyl-sn-glycero-3-phospho-(1D-myo-inositol)(out)</text>
        <dbReference type="Rhea" id="RHEA:38691"/>
        <dbReference type="ChEBI" id="CHEBI:57880"/>
    </reaction>
    <physiologicalReaction direction="left-to-right" evidence="2">
        <dbReference type="Rhea" id="RHEA:38692"/>
    </physiologicalReaction>
</comment>
<comment type="cofactor">
    <cofactor evidence="1">
        <name>heme b</name>
        <dbReference type="ChEBI" id="CHEBI:60344"/>
    </cofactor>
</comment>
<comment type="subcellular location">
    <subcellularLocation>
        <location evidence="2">Cytoplasm</location>
    </subcellularLocation>
    <subcellularLocation>
        <location evidence="2">Endoplasmic reticulum membrane</location>
        <topology evidence="2">Peripheral membrane protein</topology>
    </subcellularLocation>
    <subcellularLocation>
        <location evidence="2">Microsome membrane</location>
        <topology evidence="2">Peripheral membrane protein</topology>
    </subcellularLocation>
</comment>
<comment type="similarity">
    <text evidence="4">Belongs to the SFH5 family.</text>
</comment>
<accession>Q6CXS7</accession>
<feature type="chain" id="PRO_0000324980" description="Phosphatidylinositol transfer protein SFH5">
    <location>
        <begin position="1"/>
        <end position="297"/>
    </location>
</feature>
<feature type="domain" description="CRAL-TRIO" evidence="3">
    <location>
        <begin position="93"/>
        <end position="258"/>
    </location>
</feature>
<feature type="binding site" evidence="1">
    <location>
        <position position="121"/>
    </location>
    <ligand>
        <name>heme</name>
        <dbReference type="ChEBI" id="CHEBI:30413"/>
    </ligand>
</feature>
<feature type="binding site" evidence="1">
    <location>
        <position position="141"/>
    </location>
    <ligand>
        <name>heme</name>
        <dbReference type="ChEBI" id="CHEBI:30413"/>
    </ligand>
</feature>
<feature type="binding site" evidence="1">
    <location>
        <position position="166"/>
    </location>
    <ligand>
        <name>heme</name>
        <dbReference type="ChEBI" id="CHEBI:30413"/>
    </ligand>
</feature>
<feature type="binding site" description="proximal binding residue" evidence="1">
    <location>
        <position position="168"/>
    </location>
    <ligand>
        <name>heme</name>
        <dbReference type="ChEBI" id="CHEBI:30413"/>
    </ligand>
    <ligandPart>
        <name>Fe</name>
        <dbReference type="ChEBI" id="CHEBI:18248"/>
    </ligandPart>
</feature>
<feature type="binding site" evidence="1">
    <location>
        <position position="202"/>
    </location>
    <ligand>
        <name>heme</name>
        <dbReference type="ChEBI" id="CHEBI:30413"/>
    </ligand>
</feature>
<keyword id="KW-0963">Cytoplasm</keyword>
<keyword id="KW-0256">Endoplasmic reticulum</keyword>
<keyword id="KW-0349">Heme</keyword>
<keyword id="KW-0408">Iron</keyword>
<keyword id="KW-0445">Lipid transport</keyword>
<keyword id="KW-0472">Membrane</keyword>
<keyword id="KW-0479">Metal-binding</keyword>
<keyword id="KW-0492">Microsome</keyword>
<keyword id="KW-1185">Reference proteome</keyword>
<keyword id="KW-0813">Transport</keyword>
<protein>
    <recommendedName>
        <fullName>Phosphatidylinositol transfer protein SFH5</fullName>
        <shortName>PITP SFH5</shortName>
    </recommendedName>
</protein>
<organism>
    <name type="scientific">Kluyveromyces lactis (strain ATCC 8585 / CBS 2359 / DSM 70799 / NBRC 1267 / NRRL Y-1140 / WM37)</name>
    <name type="common">Yeast</name>
    <name type="synonym">Candida sphaerica</name>
    <dbReference type="NCBI Taxonomy" id="284590"/>
    <lineage>
        <taxon>Eukaryota</taxon>
        <taxon>Fungi</taxon>
        <taxon>Dikarya</taxon>
        <taxon>Ascomycota</taxon>
        <taxon>Saccharomycotina</taxon>
        <taxon>Saccharomycetes</taxon>
        <taxon>Saccharomycetales</taxon>
        <taxon>Saccharomycetaceae</taxon>
        <taxon>Kluyveromyces</taxon>
    </lineage>
</organism>
<reference key="1">
    <citation type="journal article" date="2004" name="Nature">
        <title>Genome evolution in yeasts.</title>
        <authorList>
            <person name="Dujon B."/>
            <person name="Sherman D."/>
            <person name="Fischer G."/>
            <person name="Durrens P."/>
            <person name="Casaregola S."/>
            <person name="Lafontaine I."/>
            <person name="de Montigny J."/>
            <person name="Marck C."/>
            <person name="Neuveglise C."/>
            <person name="Talla E."/>
            <person name="Goffard N."/>
            <person name="Frangeul L."/>
            <person name="Aigle M."/>
            <person name="Anthouard V."/>
            <person name="Babour A."/>
            <person name="Barbe V."/>
            <person name="Barnay S."/>
            <person name="Blanchin S."/>
            <person name="Beckerich J.-M."/>
            <person name="Beyne E."/>
            <person name="Bleykasten C."/>
            <person name="Boisrame A."/>
            <person name="Boyer J."/>
            <person name="Cattolico L."/>
            <person name="Confanioleri F."/>
            <person name="de Daruvar A."/>
            <person name="Despons L."/>
            <person name="Fabre E."/>
            <person name="Fairhead C."/>
            <person name="Ferry-Dumazet H."/>
            <person name="Groppi A."/>
            <person name="Hantraye F."/>
            <person name="Hennequin C."/>
            <person name="Jauniaux N."/>
            <person name="Joyet P."/>
            <person name="Kachouri R."/>
            <person name="Kerrest A."/>
            <person name="Koszul R."/>
            <person name="Lemaire M."/>
            <person name="Lesur I."/>
            <person name="Ma L."/>
            <person name="Muller H."/>
            <person name="Nicaud J.-M."/>
            <person name="Nikolski M."/>
            <person name="Oztas S."/>
            <person name="Ozier-Kalogeropoulos O."/>
            <person name="Pellenz S."/>
            <person name="Potier S."/>
            <person name="Richard G.-F."/>
            <person name="Straub M.-L."/>
            <person name="Suleau A."/>
            <person name="Swennen D."/>
            <person name="Tekaia F."/>
            <person name="Wesolowski-Louvel M."/>
            <person name="Westhof E."/>
            <person name="Wirth B."/>
            <person name="Zeniou-Meyer M."/>
            <person name="Zivanovic Y."/>
            <person name="Bolotin-Fukuhara M."/>
            <person name="Thierry A."/>
            <person name="Bouchier C."/>
            <person name="Caudron B."/>
            <person name="Scarpelli C."/>
            <person name="Gaillardin C."/>
            <person name="Weissenbach J."/>
            <person name="Wincker P."/>
            <person name="Souciet J.-L."/>
        </authorList>
    </citation>
    <scope>NUCLEOTIDE SEQUENCE [LARGE SCALE GENOMIC DNA]</scope>
    <source>
        <strain>ATCC 8585 / CBS 2359 / DSM 70799 / NBRC 1267 / NRRL Y-1140 / WM37</strain>
    </source>
</reference>